<organism>
    <name type="scientific">Bacillus cereus (strain Q1)</name>
    <dbReference type="NCBI Taxonomy" id="361100"/>
    <lineage>
        <taxon>Bacteria</taxon>
        <taxon>Bacillati</taxon>
        <taxon>Bacillota</taxon>
        <taxon>Bacilli</taxon>
        <taxon>Bacillales</taxon>
        <taxon>Bacillaceae</taxon>
        <taxon>Bacillus</taxon>
        <taxon>Bacillus cereus group</taxon>
    </lineage>
</organism>
<evidence type="ECO:0000255" key="1">
    <source>
        <dbReference type="HAMAP-Rule" id="MF_00186"/>
    </source>
</evidence>
<proteinExistence type="inferred from homology"/>
<reference key="1">
    <citation type="journal article" date="2009" name="J. Bacteriol.">
        <title>Complete genome sequence of the extremophilic Bacillus cereus strain Q1 with industrial applications.</title>
        <authorList>
            <person name="Xiong Z."/>
            <person name="Jiang Y."/>
            <person name="Qi D."/>
            <person name="Lu H."/>
            <person name="Yang F."/>
            <person name="Yang J."/>
            <person name="Chen L."/>
            <person name="Sun L."/>
            <person name="Xu X."/>
            <person name="Xue Y."/>
            <person name="Zhu Y."/>
            <person name="Jin Q."/>
        </authorList>
    </citation>
    <scope>NUCLEOTIDE SEQUENCE [LARGE SCALE GENOMIC DNA]</scope>
    <source>
        <strain>Q1</strain>
    </source>
</reference>
<keyword id="KW-0067">ATP-binding</keyword>
<keyword id="KW-0319">Glycerol metabolism</keyword>
<keyword id="KW-0418">Kinase</keyword>
<keyword id="KW-0547">Nucleotide-binding</keyword>
<keyword id="KW-0597">Phosphoprotein</keyword>
<keyword id="KW-0808">Transferase</keyword>
<feature type="chain" id="PRO_1000124182" description="Glycerol kinase">
    <location>
        <begin position="1"/>
        <end position="496"/>
    </location>
</feature>
<feature type="binding site" evidence="1">
    <location>
        <position position="12"/>
    </location>
    <ligand>
        <name>ADP</name>
        <dbReference type="ChEBI" id="CHEBI:456216"/>
    </ligand>
</feature>
<feature type="binding site" evidence="1">
    <location>
        <position position="12"/>
    </location>
    <ligand>
        <name>ATP</name>
        <dbReference type="ChEBI" id="CHEBI:30616"/>
    </ligand>
</feature>
<feature type="binding site" evidence="1">
    <location>
        <position position="12"/>
    </location>
    <ligand>
        <name>sn-glycerol 3-phosphate</name>
        <dbReference type="ChEBI" id="CHEBI:57597"/>
    </ligand>
</feature>
<feature type="binding site" evidence="1">
    <location>
        <position position="13"/>
    </location>
    <ligand>
        <name>ATP</name>
        <dbReference type="ChEBI" id="CHEBI:30616"/>
    </ligand>
</feature>
<feature type="binding site" evidence="1">
    <location>
        <position position="14"/>
    </location>
    <ligand>
        <name>ATP</name>
        <dbReference type="ChEBI" id="CHEBI:30616"/>
    </ligand>
</feature>
<feature type="binding site" evidence="1">
    <location>
        <position position="16"/>
    </location>
    <ligand>
        <name>ADP</name>
        <dbReference type="ChEBI" id="CHEBI:456216"/>
    </ligand>
</feature>
<feature type="binding site" evidence="1">
    <location>
        <position position="82"/>
    </location>
    <ligand>
        <name>glycerol</name>
        <dbReference type="ChEBI" id="CHEBI:17754"/>
    </ligand>
</feature>
<feature type="binding site" evidence="1">
    <location>
        <position position="82"/>
    </location>
    <ligand>
        <name>sn-glycerol 3-phosphate</name>
        <dbReference type="ChEBI" id="CHEBI:57597"/>
    </ligand>
</feature>
<feature type="binding site" evidence="1">
    <location>
        <position position="83"/>
    </location>
    <ligand>
        <name>glycerol</name>
        <dbReference type="ChEBI" id="CHEBI:17754"/>
    </ligand>
</feature>
<feature type="binding site" evidence="1">
    <location>
        <position position="83"/>
    </location>
    <ligand>
        <name>sn-glycerol 3-phosphate</name>
        <dbReference type="ChEBI" id="CHEBI:57597"/>
    </ligand>
</feature>
<feature type="binding site" evidence="1">
    <location>
        <position position="134"/>
    </location>
    <ligand>
        <name>glycerol</name>
        <dbReference type="ChEBI" id="CHEBI:17754"/>
    </ligand>
</feature>
<feature type="binding site" evidence="1">
    <location>
        <position position="134"/>
    </location>
    <ligand>
        <name>sn-glycerol 3-phosphate</name>
        <dbReference type="ChEBI" id="CHEBI:57597"/>
    </ligand>
</feature>
<feature type="binding site" evidence="1">
    <location>
        <position position="244"/>
    </location>
    <ligand>
        <name>glycerol</name>
        <dbReference type="ChEBI" id="CHEBI:17754"/>
    </ligand>
</feature>
<feature type="binding site" evidence="1">
    <location>
        <position position="244"/>
    </location>
    <ligand>
        <name>sn-glycerol 3-phosphate</name>
        <dbReference type="ChEBI" id="CHEBI:57597"/>
    </ligand>
</feature>
<feature type="binding site" evidence="1">
    <location>
        <position position="245"/>
    </location>
    <ligand>
        <name>glycerol</name>
        <dbReference type="ChEBI" id="CHEBI:17754"/>
    </ligand>
</feature>
<feature type="binding site" evidence="1">
    <location>
        <position position="266"/>
    </location>
    <ligand>
        <name>ADP</name>
        <dbReference type="ChEBI" id="CHEBI:456216"/>
    </ligand>
</feature>
<feature type="binding site" evidence="1">
    <location>
        <position position="266"/>
    </location>
    <ligand>
        <name>ATP</name>
        <dbReference type="ChEBI" id="CHEBI:30616"/>
    </ligand>
</feature>
<feature type="binding site" evidence="1">
    <location>
        <position position="309"/>
    </location>
    <ligand>
        <name>ADP</name>
        <dbReference type="ChEBI" id="CHEBI:456216"/>
    </ligand>
</feature>
<feature type="binding site" evidence="1">
    <location>
        <position position="309"/>
    </location>
    <ligand>
        <name>ATP</name>
        <dbReference type="ChEBI" id="CHEBI:30616"/>
    </ligand>
</feature>
<feature type="binding site" evidence="1">
    <location>
        <position position="313"/>
    </location>
    <ligand>
        <name>ATP</name>
        <dbReference type="ChEBI" id="CHEBI:30616"/>
    </ligand>
</feature>
<feature type="binding site" evidence="1">
    <location>
        <position position="410"/>
    </location>
    <ligand>
        <name>ADP</name>
        <dbReference type="ChEBI" id="CHEBI:456216"/>
    </ligand>
</feature>
<feature type="binding site" evidence="1">
    <location>
        <position position="410"/>
    </location>
    <ligand>
        <name>ATP</name>
        <dbReference type="ChEBI" id="CHEBI:30616"/>
    </ligand>
</feature>
<feature type="binding site" evidence="1">
    <location>
        <position position="414"/>
    </location>
    <ligand>
        <name>ADP</name>
        <dbReference type="ChEBI" id="CHEBI:456216"/>
    </ligand>
</feature>
<feature type="modified residue" description="Phosphohistidine; by HPr" evidence="1">
    <location>
        <position position="230"/>
    </location>
</feature>
<accession>B9IT52</accession>
<protein>
    <recommendedName>
        <fullName evidence="1">Glycerol kinase</fullName>
        <ecNumber evidence="1">2.7.1.30</ecNumber>
    </recommendedName>
    <alternativeName>
        <fullName evidence="1">ATP:glycerol 3-phosphotransferase</fullName>
    </alternativeName>
    <alternativeName>
        <fullName evidence="1">Glycerokinase</fullName>
        <shortName evidence="1">GK</shortName>
    </alternativeName>
</protein>
<gene>
    <name evidence="1" type="primary">glpK</name>
    <name type="ordered locus">BCQ_1104</name>
</gene>
<dbReference type="EC" id="2.7.1.30" evidence="1"/>
<dbReference type="EMBL" id="CP000227">
    <property type="protein sequence ID" value="ACM11534.1"/>
    <property type="molecule type" value="Genomic_DNA"/>
</dbReference>
<dbReference type="SMR" id="B9IT52"/>
<dbReference type="KEGG" id="bcq:BCQ_1104"/>
<dbReference type="HOGENOM" id="CLU_009281_2_3_9"/>
<dbReference type="UniPathway" id="UPA00618">
    <property type="reaction ID" value="UER00672"/>
</dbReference>
<dbReference type="Proteomes" id="UP000000441">
    <property type="component" value="Chromosome"/>
</dbReference>
<dbReference type="GO" id="GO:0005829">
    <property type="term" value="C:cytosol"/>
    <property type="evidence" value="ECO:0007669"/>
    <property type="project" value="TreeGrafter"/>
</dbReference>
<dbReference type="GO" id="GO:0005524">
    <property type="term" value="F:ATP binding"/>
    <property type="evidence" value="ECO:0007669"/>
    <property type="project" value="UniProtKB-UniRule"/>
</dbReference>
<dbReference type="GO" id="GO:0004370">
    <property type="term" value="F:glycerol kinase activity"/>
    <property type="evidence" value="ECO:0000250"/>
    <property type="project" value="UniProtKB"/>
</dbReference>
<dbReference type="GO" id="GO:0019563">
    <property type="term" value="P:glycerol catabolic process"/>
    <property type="evidence" value="ECO:0007669"/>
    <property type="project" value="UniProtKB-UniRule"/>
</dbReference>
<dbReference type="GO" id="GO:0006071">
    <property type="term" value="P:glycerol metabolic process"/>
    <property type="evidence" value="ECO:0000250"/>
    <property type="project" value="UniProtKB"/>
</dbReference>
<dbReference type="GO" id="GO:0006072">
    <property type="term" value="P:glycerol-3-phosphate metabolic process"/>
    <property type="evidence" value="ECO:0007669"/>
    <property type="project" value="InterPro"/>
</dbReference>
<dbReference type="CDD" id="cd07786">
    <property type="entry name" value="FGGY_EcGK_like"/>
    <property type="match status" value="1"/>
</dbReference>
<dbReference type="FunFam" id="3.30.420.40:FF:000007">
    <property type="entry name" value="Glycerol kinase"/>
    <property type="match status" value="1"/>
</dbReference>
<dbReference type="FunFam" id="3.30.420.40:FF:000008">
    <property type="entry name" value="Glycerol kinase"/>
    <property type="match status" value="1"/>
</dbReference>
<dbReference type="Gene3D" id="3.30.420.40">
    <property type="match status" value="2"/>
</dbReference>
<dbReference type="HAMAP" id="MF_00186">
    <property type="entry name" value="Glycerol_kin"/>
    <property type="match status" value="1"/>
</dbReference>
<dbReference type="InterPro" id="IPR043129">
    <property type="entry name" value="ATPase_NBD"/>
</dbReference>
<dbReference type="InterPro" id="IPR000577">
    <property type="entry name" value="Carb_kinase_FGGY"/>
</dbReference>
<dbReference type="InterPro" id="IPR018483">
    <property type="entry name" value="Carb_kinase_FGGY_CS"/>
</dbReference>
<dbReference type="InterPro" id="IPR018485">
    <property type="entry name" value="FGGY_C"/>
</dbReference>
<dbReference type="InterPro" id="IPR018484">
    <property type="entry name" value="FGGY_N"/>
</dbReference>
<dbReference type="InterPro" id="IPR005999">
    <property type="entry name" value="Glycerol_kin"/>
</dbReference>
<dbReference type="NCBIfam" id="TIGR01311">
    <property type="entry name" value="glycerol_kin"/>
    <property type="match status" value="1"/>
</dbReference>
<dbReference type="NCBIfam" id="NF000756">
    <property type="entry name" value="PRK00047.1"/>
    <property type="match status" value="1"/>
</dbReference>
<dbReference type="PANTHER" id="PTHR10196:SF69">
    <property type="entry name" value="GLYCEROL KINASE"/>
    <property type="match status" value="1"/>
</dbReference>
<dbReference type="PANTHER" id="PTHR10196">
    <property type="entry name" value="SUGAR KINASE"/>
    <property type="match status" value="1"/>
</dbReference>
<dbReference type="Pfam" id="PF02782">
    <property type="entry name" value="FGGY_C"/>
    <property type="match status" value="1"/>
</dbReference>
<dbReference type="Pfam" id="PF00370">
    <property type="entry name" value="FGGY_N"/>
    <property type="match status" value="1"/>
</dbReference>
<dbReference type="PIRSF" id="PIRSF000538">
    <property type="entry name" value="GlpK"/>
    <property type="match status" value="1"/>
</dbReference>
<dbReference type="SUPFAM" id="SSF53067">
    <property type="entry name" value="Actin-like ATPase domain"/>
    <property type="match status" value="2"/>
</dbReference>
<dbReference type="PROSITE" id="PS00933">
    <property type="entry name" value="FGGY_KINASES_1"/>
    <property type="match status" value="1"/>
</dbReference>
<dbReference type="PROSITE" id="PS00445">
    <property type="entry name" value="FGGY_KINASES_2"/>
    <property type="match status" value="1"/>
</dbReference>
<sequence>MKKYILSLDQGTTSSRAILFNKKGEIVHSAQKEFTQHFPKPGWVEHNAQEIWGSILAVIATCLSEADVKPEQIAGIGITNQRETAVVWDKTTGKPIYNAIVWQSRQTAEICDELKEKGYSEMVREKTGLLIDAYFSGTKVKWILDNVEGAREKAENGDLLFGTIDTWLVWKLSGGKAHVTDYSNASRTLMFNIHDLQWDDELLDMLTVPKSMLPEVRPSSEVYGETIDYHFFGQNVPIAGVAGDQQAALFGQACFGEGMAKNTYGTGCFMLMNTGEKAVASEHGLLTTIAWGIDGKVNYALEGSIFVAGSAIQWLRDGMRMFKDASESEVYASRVESTDGVYVVPAFVGLGTPYWDSEVRGAMFGVTRGTTKEHFIRATLESLAYQTKDVLCAMEADSGIELKTLRVDGGAVKNNFLMKFQSDILDVPVERPVINETTALGAAYLAGLAVGYWKNQDEIKEQWHMDKRFEPTMEAEISEELYAGWKKAIEATKAFK</sequence>
<comment type="function">
    <text evidence="1">Key enzyme in the regulation of glycerol uptake and metabolism. Catalyzes the phosphorylation of glycerol to yield sn-glycerol 3-phosphate.</text>
</comment>
<comment type="catalytic activity">
    <reaction evidence="1">
        <text>glycerol + ATP = sn-glycerol 3-phosphate + ADP + H(+)</text>
        <dbReference type="Rhea" id="RHEA:21644"/>
        <dbReference type="ChEBI" id="CHEBI:15378"/>
        <dbReference type="ChEBI" id="CHEBI:17754"/>
        <dbReference type="ChEBI" id="CHEBI:30616"/>
        <dbReference type="ChEBI" id="CHEBI:57597"/>
        <dbReference type="ChEBI" id="CHEBI:456216"/>
        <dbReference type="EC" id="2.7.1.30"/>
    </reaction>
</comment>
<comment type="activity regulation">
    <text evidence="1">Activated by phosphorylation and inhibited by fructose 1,6-bisphosphate (FBP).</text>
</comment>
<comment type="pathway">
    <text evidence="1">Polyol metabolism; glycerol degradation via glycerol kinase pathway; sn-glycerol 3-phosphate from glycerol: step 1/1.</text>
</comment>
<comment type="subunit">
    <text evidence="1">Homotetramer and homodimer (in equilibrium).</text>
</comment>
<comment type="PTM">
    <text evidence="1">The phosphoenolpyruvate-dependent sugar phosphotransferase system (PTS), including enzyme I, and histidine-containing protein (HPr) are required for the phosphorylation, which leads to the activation of the enzyme.</text>
</comment>
<comment type="similarity">
    <text evidence="1">Belongs to the FGGY kinase family.</text>
</comment>
<name>GLPK_BACCQ</name>